<protein>
    <recommendedName>
        <fullName evidence="1">Thiamine-phosphate synthase</fullName>
        <shortName evidence="1">TP synthase</shortName>
        <shortName evidence="1">TPS</shortName>
        <ecNumber evidence="1">2.5.1.3</ecNumber>
    </recommendedName>
    <alternativeName>
        <fullName evidence="1">Thiamine-phosphate pyrophosphorylase</fullName>
        <shortName evidence="1">TMP pyrophosphorylase</shortName>
        <shortName evidence="1">TMP-PPase</shortName>
    </alternativeName>
</protein>
<evidence type="ECO:0000255" key="1">
    <source>
        <dbReference type="HAMAP-Rule" id="MF_00097"/>
    </source>
</evidence>
<accession>A4T2R5</accession>
<keyword id="KW-0460">Magnesium</keyword>
<keyword id="KW-0479">Metal-binding</keyword>
<keyword id="KW-0784">Thiamine biosynthesis</keyword>
<keyword id="KW-0808">Transferase</keyword>
<sequence>MWSRSSLRRLTATVSTVPESPSLQGARLYLCTDARRERGDLADFADAALAGGVDIIQLRDKGSPGEKAFGPLEARAEIDALHVLAEAARRHNALVAVNDRADIARASGAEVLHLGQDDLPLTVARQIVGDRVIGRSTHDLAQAEAAIAEDVDYFCVGPCWPTPTKPGRAAPGLDLVREVAALNTTKPWFAIGGIDAQRLPDVLDAGARRVVVVRAITAAEDPRAAAEQLAGMLDSAV</sequence>
<dbReference type="EC" id="2.5.1.3" evidence="1"/>
<dbReference type="EMBL" id="CP000656">
    <property type="protein sequence ID" value="ABP42693.1"/>
    <property type="molecule type" value="Genomic_DNA"/>
</dbReference>
<dbReference type="SMR" id="A4T2R5"/>
<dbReference type="STRING" id="350054.Mflv_0198"/>
<dbReference type="KEGG" id="mgi:Mflv_0198"/>
<dbReference type="eggNOG" id="COG0352">
    <property type="taxonomic scope" value="Bacteria"/>
</dbReference>
<dbReference type="HOGENOM" id="CLU_018272_3_0_11"/>
<dbReference type="UniPathway" id="UPA00060">
    <property type="reaction ID" value="UER00141"/>
</dbReference>
<dbReference type="GO" id="GO:0005737">
    <property type="term" value="C:cytoplasm"/>
    <property type="evidence" value="ECO:0007669"/>
    <property type="project" value="TreeGrafter"/>
</dbReference>
<dbReference type="GO" id="GO:0000287">
    <property type="term" value="F:magnesium ion binding"/>
    <property type="evidence" value="ECO:0007669"/>
    <property type="project" value="UniProtKB-UniRule"/>
</dbReference>
<dbReference type="GO" id="GO:0004789">
    <property type="term" value="F:thiamine-phosphate diphosphorylase activity"/>
    <property type="evidence" value="ECO:0007669"/>
    <property type="project" value="UniProtKB-UniRule"/>
</dbReference>
<dbReference type="GO" id="GO:0009228">
    <property type="term" value="P:thiamine biosynthetic process"/>
    <property type="evidence" value="ECO:0007669"/>
    <property type="project" value="UniProtKB-KW"/>
</dbReference>
<dbReference type="GO" id="GO:0009229">
    <property type="term" value="P:thiamine diphosphate biosynthetic process"/>
    <property type="evidence" value="ECO:0007669"/>
    <property type="project" value="UniProtKB-UniRule"/>
</dbReference>
<dbReference type="CDD" id="cd00564">
    <property type="entry name" value="TMP_TenI"/>
    <property type="match status" value="1"/>
</dbReference>
<dbReference type="FunFam" id="3.20.20.70:FF:000178">
    <property type="entry name" value="Thiamine-phosphate synthase"/>
    <property type="match status" value="1"/>
</dbReference>
<dbReference type="Gene3D" id="3.20.20.70">
    <property type="entry name" value="Aldolase class I"/>
    <property type="match status" value="1"/>
</dbReference>
<dbReference type="HAMAP" id="MF_00097">
    <property type="entry name" value="TMP_synthase"/>
    <property type="match status" value="1"/>
</dbReference>
<dbReference type="InterPro" id="IPR013785">
    <property type="entry name" value="Aldolase_TIM"/>
</dbReference>
<dbReference type="InterPro" id="IPR036206">
    <property type="entry name" value="ThiamineP_synth_sf"/>
</dbReference>
<dbReference type="InterPro" id="IPR022998">
    <property type="entry name" value="ThiamineP_synth_TenI"/>
</dbReference>
<dbReference type="InterPro" id="IPR034291">
    <property type="entry name" value="TMP_synthase"/>
</dbReference>
<dbReference type="NCBIfam" id="TIGR00693">
    <property type="entry name" value="thiE"/>
    <property type="match status" value="1"/>
</dbReference>
<dbReference type="PANTHER" id="PTHR20857">
    <property type="entry name" value="THIAMINE-PHOSPHATE PYROPHOSPHORYLASE"/>
    <property type="match status" value="1"/>
</dbReference>
<dbReference type="PANTHER" id="PTHR20857:SF15">
    <property type="entry name" value="THIAMINE-PHOSPHATE SYNTHASE"/>
    <property type="match status" value="1"/>
</dbReference>
<dbReference type="Pfam" id="PF02581">
    <property type="entry name" value="TMP-TENI"/>
    <property type="match status" value="1"/>
</dbReference>
<dbReference type="SUPFAM" id="SSF51391">
    <property type="entry name" value="Thiamin phosphate synthase"/>
    <property type="match status" value="1"/>
</dbReference>
<organism>
    <name type="scientific">Mycolicibacterium gilvum (strain PYR-GCK)</name>
    <name type="common">Mycobacterium gilvum (strain PYR-GCK)</name>
    <dbReference type="NCBI Taxonomy" id="350054"/>
    <lineage>
        <taxon>Bacteria</taxon>
        <taxon>Bacillati</taxon>
        <taxon>Actinomycetota</taxon>
        <taxon>Actinomycetes</taxon>
        <taxon>Mycobacteriales</taxon>
        <taxon>Mycobacteriaceae</taxon>
        <taxon>Mycolicibacterium</taxon>
    </lineage>
</organism>
<feature type="chain" id="PRO_0000336407" description="Thiamine-phosphate synthase">
    <location>
        <begin position="1"/>
        <end position="237"/>
    </location>
</feature>
<feature type="binding site" evidence="1">
    <location>
        <begin position="57"/>
        <end position="61"/>
    </location>
    <ligand>
        <name>4-amino-2-methyl-5-(diphosphooxymethyl)pyrimidine</name>
        <dbReference type="ChEBI" id="CHEBI:57841"/>
    </ligand>
</feature>
<feature type="binding site" evidence="1">
    <location>
        <position position="98"/>
    </location>
    <ligand>
        <name>4-amino-2-methyl-5-(diphosphooxymethyl)pyrimidine</name>
        <dbReference type="ChEBI" id="CHEBI:57841"/>
    </ligand>
</feature>
<feature type="binding site" evidence="1">
    <location>
        <position position="99"/>
    </location>
    <ligand>
        <name>Mg(2+)</name>
        <dbReference type="ChEBI" id="CHEBI:18420"/>
    </ligand>
</feature>
<feature type="binding site" evidence="1">
    <location>
        <position position="118"/>
    </location>
    <ligand>
        <name>Mg(2+)</name>
        <dbReference type="ChEBI" id="CHEBI:18420"/>
    </ligand>
</feature>
<feature type="binding site" evidence="1">
    <location>
        <position position="136"/>
    </location>
    <ligand>
        <name>4-amino-2-methyl-5-(diphosphooxymethyl)pyrimidine</name>
        <dbReference type="ChEBI" id="CHEBI:57841"/>
    </ligand>
</feature>
<feature type="binding site" evidence="1">
    <location>
        <begin position="162"/>
        <end position="164"/>
    </location>
    <ligand>
        <name>2-[(2R,5Z)-2-carboxy-4-methylthiazol-5(2H)-ylidene]ethyl phosphate</name>
        <dbReference type="ChEBI" id="CHEBI:62899"/>
    </ligand>
</feature>
<feature type="binding site" evidence="1">
    <location>
        <position position="165"/>
    </location>
    <ligand>
        <name>4-amino-2-methyl-5-(diphosphooxymethyl)pyrimidine</name>
        <dbReference type="ChEBI" id="CHEBI:57841"/>
    </ligand>
</feature>
<feature type="binding site" evidence="1">
    <location>
        <position position="193"/>
    </location>
    <ligand>
        <name>2-[(2R,5Z)-2-carboxy-4-methylthiazol-5(2H)-ylidene]ethyl phosphate</name>
        <dbReference type="ChEBI" id="CHEBI:62899"/>
    </ligand>
</feature>
<comment type="function">
    <text evidence="1">Condenses 4-methyl-5-(beta-hydroxyethyl)thiazole monophosphate (THZ-P) and 2-methyl-4-amino-5-hydroxymethyl pyrimidine pyrophosphate (HMP-PP) to form thiamine monophosphate (TMP).</text>
</comment>
<comment type="catalytic activity">
    <reaction evidence="1">
        <text>2-[(2R,5Z)-2-carboxy-4-methylthiazol-5(2H)-ylidene]ethyl phosphate + 4-amino-2-methyl-5-(diphosphooxymethyl)pyrimidine + 2 H(+) = thiamine phosphate + CO2 + diphosphate</text>
        <dbReference type="Rhea" id="RHEA:47844"/>
        <dbReference type="ChEBI" id="CHEBI:15378"/>
        <dbReference type="ChEBI" id="CHEBI:16526"/>
        <dbReference type="ChEBI" id="CHEBI:33019"/>
        <dbReference type="ChEBI" id="CHEBI:37575"/>
        <dbReference type="ChEBI" id="CHEBI:57841"/>
        <dbReference type="ChEBI" id="CHEBI:62899"/>
        <dbReference type="EC" id="2.5.1.3"/>
    </reaction>
</comment>
<comment type="catalytic activity">
    <reaction evidence="1">
        <text>2-(2-carboxy-4-methylthiazol-5-yl)ethyl phosphate + 4-amino-2-methyl-5-(diphosphooxymethyl)pyrimidine + 2 H(+) = thiamine phosphate + CO2 + diphosphate</text>
        <dbReference type="Rhea" id="RHEA:47848"/>
        <dbReference type="ChEBI" id="CHEBI:15378"/>
        <dbReference type="ChEBI" id="CHEBI:16526"/>
        <dbReference type="ChEBI" id="CHEBI:33019"/>
        <dbReference type="ChEBI" id="CHEBI:37575"/>
        <dbReference type="ChEBI" id="CHEBI:57841"/>
        <dbReference type="ChEBI" id="CHEBI:62890"/>
        <dbReference type="EC" id="2.5.1.3"/>
    </reaction>
</comment>
<comment type="catalytic activity">
    <reaction evidence="1">
        <text>4-methyl-5-(2-phosphooxyethyl)-thiazole + 4-amino-2-methyl-5-(diphosphooxymethyl)pyrimidine + H(+) = thiamine phosphate + diphosphate</text>
        <dbReference type="Rhea" id="RHEA:22328"/>
        <dbReference type="ChEBI" id="CHEBI:15378"/>
        <dbReference type="ChEBI" id="CHEBI:33019"/>
        <dbReference type="ChEBI" id="CHEBI:37575"/>
        <dbReference type="ChEBI" id="CHEBI:57841"/>
        <dbReference type="ChEBI" id="CHEBI:58296"/>
        <dbReference type="EC" id="2.5.1.3"/>
    </reaction>
</comment>
<comment type="cofactor">
    <cofactor evidence="1">
        <name>Mg(2+)</name>
        <dbReference type="ChEBI" id="CHEBI:18420"/>
    </cofactor>
    <text evidence="1">Binds 1 Mg(2+) ion per subunit.</text>
</comment>
<comment type="pathway">
    <text evidence="1">Cofactor biosynthesis; thiamine diphosphate biosynthesis; thiamine phosphate from 4-amino-2-methyl-5-diphosphomethylpyrimidine and 4-methyl-5-(2-phosphoethyl)-thiazole: step 1/1.</text>
</comment>
<comment type="similarity">
    <text evidence="1">Belongs to the thiamine-phosphate synthase family.</text>
</comment>
<gene>
    <name evidence="1" type="primary">thiE</name>
    <name type="ordered locus">Mflv_0198</name>
</gene>
<reference key="1">
    <citation type="submission" date="2007-04" db="EMBL/GenBank/DDBJ databases">
        <title>Complete sequence of chromosome of Mycobacterium gilvum PYR-GCK.</title>
        <authorList>
            <consortium name="US DOE Joint Genome Institute"/>
            <person name="Copeland A."/>
            <person name="Lucas S."/>
            <person name="Lapidus A."/>
            <person name="Barry K."/>
            <person name="Detter J.C."/>
            <person name="Glavina del Rio T."/>
            <person name="Hammon N."/>
            <person name="Israni S."/>
            <person name="Dalin E."/>
            <person name="Tice H."/>
            <person name="Pitluck S."/>
            <person name="Chain P."/>
            <person name="Malfatti S."/>
            <person name="Shin M."/>
            <person name="Vergez L."/>
            <person name="Schmutz J."/>
            <person name="Larimer F."/>
            <person name="Land M."/>
            <person name="Hauser L."/>
            <person name="Kyrpides N."/>
            <person name="Mikhailova N."/>
            <person name="Miller C."/>
            <person name="Richardson P."/>
        </authorList>
    </citation>
    <scope>NUCLEOTIDE SEQUENCE [LARGE SCALE GENOMIC DNA]</scope>
    <source>
        <strain>PYR-GCK</strain>
    </source>
</reference>
<proteinExistence type="inferred from homology"/>
<name>THIE_MYCGI</name>